<reference key="1">
    <citation type="journal article" date="2003" name="Gene">
        <title>Translational machinery of channel catfish: II. Complementary DNA and expression of the complete set of 47 60S ribosomal proteins.</title>
        <authorList>
            <person name="Patterson A.P."/>
            <person name="Karsi A."/>
            <person name="Feng J."/>
            <person name="Liu Z.J."/>
        </authorList>
    </citation>
    <scope>NUCLEOTIDE SEQUENCE [MRNA]</scope>
</reference>
<proteinExistence type="inferred from homology"/>
<keyword id="KW-0963">Cytoplasm</keyword>
<keyword id="KW-0687">Ribonucleoprotein</keyword>
<keyword id="KW-0689">Ribosomal protein</keyword>
<keyword id="KW-0694">RNA-binding</keyword>
<keyword id="KW-0820">tRNA-binding</keyword>
<protein>
    <recommendedName>
        <fullName evidence="2">Large ribosomal subunit protein eL33</fullName>
    </recommendedName>
    <alternativeName>
        <fullName>60S ribosomal protein L35a</fullName>
    </alternativeName>
</protein>
<feature type="chain" id="PRO_0000192802" description="Large ribosomal subunit protein eL33">
    <location>
        <begin position="1"/>
        <end position="110"/>
    </location>
</feature>
<dbReference type="EMBL" id="AF401590">
    <property type="protein sequence ID" value="AAK95162.1"/>
    <property type="molecule type" value="mRNA"/>
</dbReference>
<dbReference type="RefSeq" id="NP_001187216.1">
    <property type="nucleotide sequence ID" value="NM_001200287.1"/>
</dbReference>
<dbReference type="SMR" id="Q90YT3"/>
<dbReference type="STRING" id="7998.ENSIPUP00000019706"/>
<dbReference type="Ensembl" id="ENSIPUT00015054896">
    <property type="protein sequence ID" value="ENSIPUP00015048148"/>
    <property type="gene ID" value="ENSIPUG00015022167"/>
</dbReference>
<dbReference type="Ensembl" id="ENSIPUT00015061100">
    <property type="protein sequence ID" value="ENSIPUP00015053490"/>
    <property type="gene ID" value="ENSIPUG00015024392"/>
</dbReference>
<dbReference type="GeneID" id="100305052"/>
<dbReference type="KEGG" id="ipu:100305052"/>
<dbReference type="CTD" id="6165"/>
<dbReference type="OMA" id="YRTNKHH"/>
<dbReference type="OrthoDB" id="1166329at2759"/>
<dbReference type="Proteomes" id="UP000221080">
    <property type="component" value="Chromosome 4"/>
</dbReference>
<dbReference type="GO" id="GO:0005737">
    <property type="term" value="C:cytoplasm"/>
    <property type="evidence" value="ECO:0007669"/>
    <property type="project" value="UniProtKB-SubCell"/>
</dbReference>
<dbReference type="GO" id="GO:1990904">
    <property type="term" value="C:ribonucleoprotein complex"/>
    <property type="evidence" value="ECO:0007669"/>
    <property type="project" value="UniProtKB-KW"/>
</dbReference>
<dbReference type="GO" id="GO:0005840">
    <property type="term" value="C:ribosome"/>
    <property type="evidence" value="ECO:0007669"/>
    <property type="project" value="UniProtKB-KW"/>
</dbReference>
<dbReference type="GO" id="GO:0003735">
    <property type="term" value="F:structural constituent of ribosome"/>
    <property type="evidence" value="ECO:0007669"/>
    <property type="project" value="InterPro"/>
</dbReference>
<dbReference type="GO" id="GO:0000049">
    <property type="term" value="F:tRNA binding"/>
    <property type="evidence" value="ECO:0007669"/>
    <property type="project" value="UniProtKB-KW"/>
</dbReference>
<dbReference type="GO" id="GO:0006412">
    <property type="term" value="P:translation"/>
    <property type="evidence" value="ECO:0007669"/>
    <property type="project" value="InterPro"/>
</dbReference>
<dbReference type="FunFam" id="2.40.10.190:FF:000005">
    <property type="entry name" value="60S ribosomal protein L35a"/>
    <property type="match status" value="1"/>
</dbReference>
<dbReference type="Gene3D" id="2.40.10.190">
    <property type="entry name" value="translation elongation factor selb, chain A, domain 4"/>
    <property type="match status" value="1"/>
</dbReference>
<dbReference type="HAMAP" id="MF_00573">
    <property type="entry name" value="Ribosomal_eL33"/>
    <property type="match status" value="1"/>
</dbReference>
<dbReference type="InterPro" id="IPR001780">
    <property type="entry name" value="Ribosomal_eL33"/>
</dbReference>
<dbReference type="InterPro" id="IPR018266">
    <property type="entry name" value="Ribosomal_eL33_CS"/>
</dbReference>
<dbReference type="InterPro" id="IPR038661">
    <property type="entry name" value="Ribosomal_eL33_sf"/>
</dbReference>
<dbReference type="InterPro" id="IPR009000">
    <property type="entry name" value="Transl_B-barrel_sf"/>
</dbReference>
<dbReference type="PANTHER" id="PTHR10902">
    <property type="entry name" value="60S RIBOSOMAL PROTEIN L35A"/>
    <property type="match status" value="1"/>
</dbReference>
<dbReference type="Pfam" id="PF01247">
    <property type="entry name" value="Ribosomal_L35Ae"/>
    <property type="match status" value="1"/>
</dbReference>
<dbReference type="SUPFAM" id="SSF50447">
    <property type="entry name" value="Translation proteins"/>
    <property type="match status" value="1"/>
</dbReference>
<dbReference type="PROSITE" id="PS01105">
    <property type="entry name" value="RIBOSOMAL_L35AE"/>
    <property type="match status" value="1"/>
</dbReference>
<comment type="function">
    <text evidence="1">Component of the large ribosomal subunit. The ribosome is a large ribonucleoprotein complex responsible for the synthesis of proteins in the cell.</text>
</comment>
<comment type="subunit">
    <text evidence="1">Component of the large ribosomal subunit.</text>
</comment>
<comment type="subcellular location">
    <subcellularLocation>
        <location evidence="1">Cytoplasm</location>
    </subcellularLocation>
</comment>
<comment type="similarity">
    <text evidence="2">Belongs to the eukaryotic ribosomal protein eL33 family.</text>
</comment>
<name>RL35A_ICTPU</name>
<organism>
    <name type="scientific">Ictalurus punctatus</name>
    <name type="common">Channel catfish</name>
    <name type="synonym">Silurus punctatus</name>
    <dbReference type="NCBI Taxonomy" id="7998"/>
    <lineage>
        <taxon>Eukaryota</taxon>
        <taxon>Metazoa</taxon>
        <taxon>Chordata</taxon>
        <taxon>Craniata</taxon>
        <taxon>Vertebrata</taxon>
        <taxon>Euteleostomi</taxon>
        <taxon>Actinopterygii</taxon>
        <taxon>Neopterygii</taxon>
        <taxon>Teleostei</taxon>
        <taxon>Ostariophysi</taxon>
        <taxon>Siluriformes</taxon>
        <taxon>Ictaluridae</taxon>
        <taxon>Ictalurus</taxon>
    </lineage>
</organism>
<sequence>MPGRLWCKAIFAGYKRGLRNQREHTALLKVEGVYSRNEVDFYLGKRCAYVYKAKKTTVTPGGKPNKTRVIWGKVTRAHGNSGMVRAKFTSNLPPKAIGHRIRVMLYPSRV</sequence>
<accession>Q90YT3</accession>
<gene>
    <name type="primary">rpl35a</name>
</gene>
<evidence type="ECO:0000250" key="1">
    <source>
        <dbReference type="UniProtKB" id="P18077"/>
    </source>
</evidence>
<evidence type="ECO:0000305" key="2"/>